<proteinExistence type="evidence at transcript level"/>
<name>RN167_RAT</name>
<dbReference type="EC" id="2.3.2.27" evidence="1"/>
<dbReference type="EMBL" id="BC083670">
    <property type="protein sequence ID" value="AAH83670.1"/>
    <property type="molecule type" value="mRNA"/>
</dbReference>
<dbReference type="RefSeq" id="NP_001008362.1">
    <property type="nucleotide sequence ID" value="NM_001008361.1"/>
</dbReference>
<dbReference type="SMR" id="Q5XIL0"/>
<dbReference type="FunCoup" id="Q5XIL0">
    <property type="interactions" value="3501"/>
</dbReference>
<dbReference type="STRING" id="10116.ENSRNOP00000005242"/>
<dbReference type="GlyCosmos" id="Q5XIL0">
    <property type="glycosylation" value="2 sites, No reported glycans"/>
</dbReference>
<dbReference type="GlyGen" id="Q5XIL0">
    <property type="glycosylation" value="2 sites"/>
</dbReference>
<dbReference type="PhosphoSitePlus" id="Q5XIL0"/>
<dbReference type="PaxDb" id="10116-ENSRNOP00000005242"/>
<dbReference type="Ensembl" id="ENSRNOT00000005242.5">
    <property type="protein sequence ID" value="ENSRNOP00000005242.4"/>
    <property type="gene ID" value="ENSRNOG00000003879.6"/>
</dbReference>
<dbReference type="GeneID" id="360554"/>
<dbReference type="KEGG" id="rno:360554"/>
<dbReference type="UCSC" id="RGD:1305972">
    <property type="organism name" value="rat"/>
</dbReference>
<dbReference type="AGR" id="RGD:1305972"/>
<dbReference type="CTD" id="26001"/>
<dbReference type="RGD" id="1305972">
    <property type="gene designation" value="Rnf167"/>
</dbReference>
<dbReference type="eggNOG" id="KOG4628">
    <property type="taxonomic scope" value="Eukaryota"/>
</dbReference>
<dbReference type="GeneTree" id="ENSGT00940000159547"/>
<dbReference type="HOGENOM" id="CLU_035275_1_1_1"/>
<dbReference type="InParanoid" id="Q5XIL0"/>
<dbReference type="OMA" id="PSYDANT"/>
<dbReference type="OrthoDB" id="8062037at2759"/>
<dbReference type="PhylomeDB" id="Q5XIL0"/>
<dbReference type="TreeFam" id="TF317486"/>
<dbReference type="UniPathway" id="UPA00143"/>
<dbReference type="PRO" id="PR:Q5XIL0"/>
<dbReference type="Proteomes" id="UP000002494">
    <property type="component" value="Chromosome 10"/>
</dbReference>
<dbReference type="Bgee" id="ENSRNOG00000003879">
    <property type="expression patterns" value="Expressed in thymus and 20 other cell types or tissues"/>
</dbReference>
<dbReference type="GO" id="GO:0005737">
    <property type="term" value="C:cytoplasm"/>
    <property type="evidence" value="ECO:0000266"/>
    <property type="project" value="RGD"/>
</dbReference>
<dbReference type="GO" id="GO:0036020">
    <property type="term" value="C:endolysosome membrane"/>
    <property type="evidence" value="ECO:0000250"/>
    <property type="project" value="UniProtKB"/>
</dbReference>
<dbReference type="GO" id="GO:0005768">
    <property type="term" value="C:endosome"/>
    <property type="evidence" value="ECO:0000266"/>
    <property type="project" value="RGD"/>
</dbReference>
<dbReference type="GO" id="GO:0005765">
    <property type="term" value="C:lysosomal membrane"/>
    <property type="evidence" value="ECO:0000266"/>
    <property type="project" value="RGD"/>
</dbReference>
<dbReference type="GO" id="GO:0005764">
    <property type="term" value="C:lysosome"/>
    <property type="evidence" value="ECO:0000250"/>
    <property type="project" value="UniProtKB"/>
</dbReference>
<dbReference type="GO" id="GO:0005886">
    <property type="term" value="C:plasma membrane"/>
    <property type="evidence" value="ECO:0007669"/>
    <property type="project" value="UniProtKB-SubCell"/>
</dbReference>
<dbReference type="GO" id="GO:0061630">
    <property type="term" value="F:ubiquitin protein ligase activity"/>
    <property type="evidence" value="ECO:0000250"/>
    <property type="project" value="UniProtKB"/>
</dbReference>
<dbReference type="GO" id="GO:0004842">
    <property type="term" value="F:ubiquitin-protein transferase activity"/>
    <property type="evidence" value="ECO:0000266"/>
    <property type="project" value="RGD"/>
</dbReference>
<dbReference type="GO" id="GO:0008270">
    <property type="term" value="F:zinc ion binding"/>
    <property type="evidence" value="ECO:0007669"/>
    <property type="project" value="UniProtKB-KW"/>
</dbReference>
<dbReference type="GO" id="GO:1990253">
    <property type="term" value="P:cellular response to leucine starvation"/>
    <property type="evidence" value="ECO:0000250"/>
    <property type="project" value="UniProtKB"/>
</dbReference>
<dbReference type="GO" id="GO:0032418">
    <property type="term" value="P:lysosome localization"/>
    <property type="evidence" value="ECO:0000250"/>
    <property type="project" value="UniProtKB"/>
</dbReference>
<dbReference type="GO" id="GO:0045786">
    <property type="term" value="P:negative regulation of cell cycle"/>
    <property type="evidence" value="ECO:0000266"/>
    <property type="project" value="RGD"/>
</dbReference>
<dbReference type="GO" id="GO:1904262">
    <property type="term" value="P:negative regulation of TORC1 signaling"/>
    <property type="evidence" value="ECO:0000250"/>
    <property type="project" value="UniProtKB"/>
</dbReference>
<dbReference type="GO" id="GO:0051640">
    <property type="term" value="P:organelle localization"/>
    <property type="evidence" value="ECO:0000266"/>
    <property type="project" value="RGD"/>
</dbReference>
<dbReference type="GO" id="GO:1904263">
    <property type="term" value="P:positive regulation of TORC1 signaling"/>
    <property type="evidence" value="ECO:0000266"/>
    <property type="project" value="RGD"/>
</dbReference>
<dbReference type="GO" id="GO:0035519">
    <property type="term" value="P:protein K29-linked ubiquitination"/>
    <property type="evidence" value="ECO:0000266"/>
    <property type="project" value="RGD"/>
</dbReference>
<dbReference type="GO" id="GO:0070534">
    <property type="term" value="P:protein K63-linked ubiquitination"/>
    <property type="evidence" value="ECO:0000266"/>
    <property type="project" value="RGD"/>
</dbReference>
<dbReference type="GO" id="GO:0000209">
    <property type="term" value="P:protein polyubiquitination"/>
    <property type="evidence" value="ECO:0000266"/>
    <property type="project" value="RGD"/>
</dbReference>
<dbReference type="GO" id="GO:0051966">
    <property type="term" value="P:regulation of synaptic transmission, glutamatergic"/>
    <property type="evidence" value="ECO:0000250"/>
    <property type="project" value="UniProtKB"/>
</dbReference>
<dbReference type="GO" id="GO:0006511">
    <property type="term" value="P:ubiquitin-dependent protein catabolic process"/>
    <property type="evidence" value="ECO:0000266"/>
    <property type="project" value="RGD"/>
</dbReference>
<dbReference type="CDD" id="cd02123">
    <property type="entry name" value="PA_C_RZF_like"/>
    <property type="match status" value="1"/>
</dbReference>
<dbReference type="CDD" id="cd16796">
    <property type="entry name" value="RING-H2_RNF13"/>
    <property type="match status" value="1"/>
</dbReference>
<dbReference type="FunFam" id="3.30.40.10:FF:000099">
    <property type="entry name" value="E3 ubiquitin-protein ligase RNF167"/>
    <property type="match status" value="1"/>
</dbReference>
<dbReference type="FunFam" id="3.50.30.30:FF:000013">
    <property type="entry name" value="E3 ubiquitin-protein ligase RNF167"/>
    <property type="match status" value="1"/>
</dbReference>
<dbReference type="Gene3D" id="3.50.30.30">
    <property type="match status" value="1"/>
</dbReference>
<dbReference type="Gene3D" id="3.30.40.10">
    <property type="entry name" value="Zinc/RING finger domain, C3HC4 (zinc finger)"/>
    <property type="match status" value="1"/>
</dbReference>
<dbReference type="InterPro" id="IPR046450">
    <property type="entry name" value="PA_dom_sf"/>
</dbReference>
<dbReference type="InterPro" id="IPR003137">
    <property type="entry name" value="PA_domain"/>
</dbReference>
<dbReference type="InterPro" id="IPR051834">
    <property type="entry name" value="RING_finger_E3_ligase"/>
</dbReference>
<dbReference type="InterPro" id="IPR001841">
    <property type="entry name" value="Znf_RING"/>
</dbReference>
<dbReference type="InterPro" id="IPR011016">
    <property type="entry name" value="Znf_RING-CH"/>
</dbReference>
<dbReference type="InterPro" id="IPR013083">
    <property type="entry name" value="Znf_RING/FYVE/PHD"/>
</dbReference>
<dbReference type="InterPro" id="IPR044744">
    <property type="entry name" value="ZNRF4/RNF13/RNF167_PA"/>
</dbReference>
<dbReference type="PANTHER" id="PTHR45931:SF20">
    <property type="entry name" value="RING-TYPE E3 UBIQUITIN TRANSFERASE"/>
    <property type="match status" value="1"/>
</dbReference>
<dbReference type="PANTHER" id="PTHR45931">
    <property type="entry name" value="SI:CH211-59O9.10"/>
    <property type="match status" value="1"/>
</dbReference>
<dbReference type="Pfam" id="PF02225">
    <property type="entry name" value="PA"/>
    <property type="match status" value="1"/>
</dbReference>
<dbReference type="Pfam" id="PF13639">
    <property type="entry name" value="zf-RING_2"/>
    <property type="match status" value="1"/>
</dbReference>
<dbReference type="SMART" id="SM00184">
    <property type="entry name" value="RING"/>
    <property type="match status" value="1"/>
</dbReference>
<dbReference type="SMART" id="SM00744">
    <property type="entry name" value="RINGv"/>
    <property type="match status" value="1"/>
</dbReference>
<dbReference type="SUPFAM" id="SSF52025">
    <property type="entry name" value="PA domain"/>
    <property type="match status" value="1"/>
</dbReference>
<dbReference type="SUPFAM" id="SSF57850">
    <property type="entry name" value="RING/U-box"/>
    <property type="match status" value="1"/>
</dbReference>
<dbReference type="PROSITE" id="PS50089">
    <property type="entry name" value="ZF_RING_2"/>
    <property type="match status" value="1"/>
</dbReference>
<keyword id="KW-1003">Cell membrane</keyword>
<keyword id="KW-0967">Endosome</keyword>
<keyword id="KW-0325">Glycoprotein</keyword>
<keyword id="KW-0458">Lysosome</keyword>
<keyword id="KW-0472">Membrane</keyword>
<keyword id="KW-0479">Metal-binding</keyword>
<keyword id="KW-1185">Reference proteome</keyword>
<keyword id="KW-0732">Signal</keyword>
<keyword id="KW-0808">Transferase</keyword>
<keyword id="KW-0812">Transmembrane</keyword>
<keyword id="KW-1133">Transmembrane helix</keyword>
<keyword id="KW-0832">Ubl conjugation</keyword>
<keyword id="KW-0833">Ubl conjugation pathway</keyword>
<keyword id="KW-0862">Zinc</keyword>
<keyword id="KW-0863">Zinc-finger</keyword>
<gene>
    <name type="primary">Rnf167</name>
</gene>
<organism>
    <name type="scientific">Rattus norvegicus</name>
    <name type="common">Rat</name>
    <dbReference type="NCBI Taxonomy" id="10116"/>
    <lineage>
        <taxon>Eukaryota</taxon>
        <taxon>Metazoa</taxon>
        <taxon>Chordata</taxon>
        <taxon>Craniata</taxon>
        <taxon>Vertebrata</taxon>
        <taxon>Euteleostomi</taxon>
        <taxon>Mammalia</taxon>
        <taxon>Eutheria</taxon>
        <taxon>Euarchontoglires</taxon>
        <taxon>Glires</taxon>
        <taxon>Rodentia</taxon>
        <taxon>Myomorpha</taxon>
        <taxon>Muroidea</taxon>
        <taxon>Muridae</taxon>
        <taxon>Murinae</taxon>
        <taxon>Rattus</taxon>
    </lineage>
</organism>
<reference key="1">
    <citation type="journal article" date="2004" name="Genome Res.">
        <title>The status, quality, and expansion of the NIH full-length cDNA project: the Mammalian Gene Collection (MGC).</title>
        <authorList>
            <consortium name="The MGC Project Team"/>
        </authorList>
    </citation>
    <scope>NUCLEOTIDE SEQUENCE [LARGE SCALE MRNA]</scope>
    <source>
        <tissue>Testis</tissue>
    </source>
</reference>
<evidence type="ECO:0000250" key="1">
    <source>
        <dbReference type="UniProtKB" id="Q9H6Y7"/>
    </source>
</evidence>
<evidence type="ECO:0000255" key="2"/>
<evidence type="ECO:0000255" key="3">
    <source>
        <dbReference type="PROSITE-ProRule" id="PRU00175"/>
    </source>
</evidence>
<evidence type="ECO:0000256" key="4">
    <source>
        <dbReference type="SAM" id="MobiDB-lite"/>
    </source>
</evidence>
<evidence type="ECO:0000305" key="5"/>
<sequence>MHPAAFPLPVVVATVLWGAAPIRGLIRATSEHNASMDFADLPALFGATLSDEGLQGFLVEAHPENACSPIAPPPSAPVNGSVFIALLRRFDCNFDLKVLNAQKAGYGAAVVHNVNSNELLNMVWNSEEIQQQIWIPSVFIGERSAEYLRALFVYEKGARVLLVPDNSFPLGYYLIPFTGIVGLLVLAMGTVLIVRCIQHRKRLQRNRLTKEQLKQIPTHDYQKGDEYDVCAICLDEYEDGDKLRILPCAHAYHSRCVDPWLTQTRKTCPICKQPVHRGPGDEEQEEETQGQEEEGDEGEPRDQPASEWTPLLGSSPTLPTSFGSLAPAPLVFPGPSTDPSPSPSSAALA</sequence>
<comment type="function">
    <text evidence="1">E3 ubiquitin-protein ligase that acts as a regulator of the TORC1 signaling pathway. Positively regulates the TORC1 signaling pathway independently of arginine levels: acts by catalyzing 'Lys-29'-polyubiquitination and degradation of CASTOR1, releasing the GATOR2 complex from CASTOR1. Also negatively regulates the TORC1 signaling pathway in response to leucine deprivation: acts by mediating 'Lys-63'-linked polyubiquitination of SESN2, promoting SESN2-interaction with the GATOR2 complex. Also involved in protein trafficking and localization. Acts as a regulator of synaptic transmission by mediating ubiquitination and degradation of AMPAR receptor GluA2/GRIA2. Does not catalyze ubiquitination of GluA1/GRIA1. Also acts as a regulator of the recycling endosome pathway by mediating ubiquitination of VAMP3. Regulates lysosome positioning by catalyzing ubiquitination and degradation of ARL8B. Plays a role in growth regulation involved in G1/S transition by mediating, possibly by mediating ubiquitination of SLC22A18. Acts with a limited set of E2 enzymes, such as UBE2D1 and UBE2N.</text>
</comment>
<comment type="catalytic activity">
    <reaction evidence="1">
        <text>S-ubiquitinyl-[E2 ubiquitin-conjugating enzyme]-L-cysteine + [acceptor protein]-L-lysine = [E2 ubiquitin-conjugating enzyme]-L-cysteine + N(6)-ubiquitinyl-[acceptor protein]-L-lysine.</text>
        <dbReference type="EC" id="2.3.2.27"/>
    </reaction>
</comment>
<comment type="pathway">
    <text evidence="1">Protein modification; protein ubiquitination.</text>
</comment>
<comment type="subcellular location">
    <subcellularLocation>
        <location evidence="1">Lysosome membrane</location>
        <topology evidence="2">Single-pass type I membrane protein</topology>
    </subcellularLocation>
    <subcellularLocation>
        <location evidence="1">Endosome membrane</location>
        <topology evidence="2">Single-pass type I membrane protein</topology>
    </subcellularLocation>
    <subcellularLocation>
        <location evidence="1">Endomembrane system</location>
        <topology evidence="2">Single-pass membrane protein</topology>
    </subcellularLocation>
    <subcellularLocation>
        <location evidence="1">Cell membrane</location>
        <topology evidence="2">Single-pass type I membrane protein</topology>
    </subcellularLocation>
    <text evidence="1">Targeted to cytoplasmic membranes; mainly localizes to lysosomal membrane. A subpopulation localizes to the cell membrane of neurons.</text>
</comment>
<comment type="PTM">
    <text evidence="1">Autoubiquitinated in vitro in the presence of UBE2D1 and UBE2E1.</text>
</comment>
<comment type="similarity">
    <text evidence="5">Belongs to the Godzilla family.</text>
</comment>
<protein>
    <recommendedName>
        <fullName evidence="5">E3 ubiquitin-protein ligase RNF167</fullName>
        <ecNumber evidence="1">2.3.2.27</ecNumber>
    </recommendedName>
    <alternativeName>
        <fullName>RING finger protein 167</fullName>
    </alternativeName>
</protein>
<accession>Q5XIL0</accession>
<feature type="signal peptide" evidence="2">
    <location>
        <begin position="1"/>
        <end position="21"/>
    </location>
</feature>
<feature type="chain" id="PRO_0000245595" description="E3 ubiquitin-protein ligase RNF167">
    <location>
        <begin position="22"/>
        <end position="349"/>
    </location>
</feature>
<feature type="transmembrane region" description="Helical" evidence="2">
    <location>
        <begin position="174"/>
        <end position="194"/>
    </location>
</feature>
<feature type="domain" description="PA" evidence="2">
    <location>
        <begin position="48"/>
        <end position="152"/>
    </location>
</feature>
<feature type="zinc finger region" description="RING-type; atypical" evidence="3">
    <location>
        <begin position="230"/>
        <end position="272"/>
    </location>
</feature>
<feature type="region of interest" description="Disordered" evidence="4">
    <location>
        <begin position="271"/>
        <end position="349"/>
    </location>
</feature>
<feature type="compositionally biased region" description="Acidic residues" evidence="4">
    <location>
        <begin position="281"/>
        <end position="297"/>
    </location>
</feature>
<feature type="compositionally biased region" description="Polar residues" evidence="4">
    <location>
        <begin position="312"/>
        <end position="323"/>
    </location>
</feature>
<feature type="compositionally biased region" description="Pro residues" evidence="4">
    <location>
        <begin position="330"/>
        <end position="342"/>
    </location>
</feature>
<feature type="glycosylation site" description="N-linked (GlcNAc...) asparagine" evidence="2">
    <location>
        <position position="33"/>
    </location>
</feature>
<feature type="glycosylation site" description="N-linked (GlcNAc...) asparagine" evidence="2">
    <location>
        <position position="79"/>
    </location>
</feature>